<sequence length="414" mass="46804">MNDGNHYRPAISPNPSADTQPSDWAYIAEGGAHIVFSYQGRSKTYATRALRVRKPSATTEPLAQAEENDLFGQWRRNILPKLLPRQLLTTSREVILEDRWYKELLAMVDVVRPDQRKSGIDFAAKGDRRGVLLEDLTSSEDDGAIAVAIEIKPKWGFLPCTEHLHPPESVSIKSHVSRFRLHQHFRGCSDDPPYDPLDLFSGDKMRMRTALDGLWTMWEISRGKVNNWKVFVGGKEISPDDLQNGLLPIGGDDFVTKITQLTLDTLQTSFALPLLKNLQQNLDPIDISSLAALFQAEYPNSPPFDPDLIPDVSAVELNGFVDIYISDPQAGQRMDSWSLRERIIAYALSAIFKDCSLFIRGFLKHAEDGVWRLVSGSDSVKVIDLDLKPIKNIQKWAETDEKVWKYWLETKGAR</sequence>
<reference key="1">
    <citation type="journal article" date="2005" name="Science">
        <title>The genome of the basidiomycetous yeast and human pathogen Cryptococcus neoformans.</title>
        <authorList>
            <person name="Loftus B.J."/>
            <person name="Fung E."/>
            <person name="Roncaglia P."/>
            <person name="Rowley D."/>
            <person name="Amedeo P."/>
            <person name="Bruno D."/>
            <person name="Vamathevan J."/>
            <person name="Miranda M."/>
            <person name="Anderson I.J."/>
            <person name="Fraser J.A."/>
            <person name="Allen J.E."/>
            <person name="Bosdet I.E."/>
            <person name="Brent M.R."/>
            <person name="Chiu R."/>
            <person name="Doering T.L."/>
            <person name="Donlin M.J."/>
            <person name="D'Souza C.A."/>
            <person name="Fox D.S."/>
            <person name="Grinberg V."/>
            <person name="Fu J."/>
            <person name="Fukushima M."/>
            <person name="Haas B.J."/>
            <person name="Huang J.C."/>
            <person name="Janbon G."/>
            <person name="Jones S.J.M."/>
            <person name="Koo H.L."/>
            <person name="Krzywinski M.I."/>
            <person name="Kwon-Chung K.J."/>
            <person name="Lengeler K.B."/>
            <person name="Maiti R."/>
            <person name="Marra M.A."/>
            <person name="Marra R.E."/>
            <person name="Mathewson C.A."/>
            <person name="Mitchell T.G."/>
            <person name="Pertea M."/>
            <person name="Riggs F.R."/>
            <person name="Salzberg S.L."/>
            <person name="Schein J.E."/>
            <person name="Shvartsbeyn A."/>
            <person name="Shin H."/>
            <person name="Shumway M."/>
            <person name="Specht C.A."/>
            <person name="Suh B.B."/>
            <person name="Tenney A."/>
            <person name="Utterback T.R."/>
            <person name="Wickes B.L."/>
            <person name="Wortman J.R."/>
            <person name="Wye N.H."/>
            <person name="Kronstad J.W."/>
            <person name="Lodge J.K."/>
            <person name="Heitman J."/>
            <person name="Davis R.W."/>
            <person name="Fraser C.M."/>
            <person name="Hyman R.W."/>
        </authorList>
    </citation>
    <scope>NUCLEOTIDE SEQUENCE [LARGE SCALE GENOMIC DNA]</scope>
    <source>
        <strain>JEC21 / ATCC MYA-565</strain>
    </source>
</reference>
<accession>P0CO34</accession>
<accession>Q55U88</accession>
<accession>Q5KI57</accession>
<comment type="function">
    <text evidence="1">Phosphorylates Ins(1,3,4,5,6)P5 at position 2 to form Ins(1,2,3,4,5,6)P6 (InsP6 or phytate).</text>
</comment>
<comment type="catalytic activity">
    <reaction>
        <text>1D-myo-inositol 1,3,4,5,6-pentakisphosphate + ATP = 1D-myo-inositol hexakisphosphate + ADP + H(+)</text>
        <dbReference type="Rhea" id="RHEA:20313"/>
        <dbReference type="ChEBI" id="CHEBI:15378"/>
        <dbReference type="ChEBI" id="CHEBI:30616"/>
        <dbReference type="ChEBI" id="CHEBI:57733"/>
        <dbReference type="ChEBI" id="CHEBI:58130"/>
        <dbReference type="ChEBI" id="CHEBI:456216"/>
        <dbReference type="EC" id="2.7.1.158"/>
    </reaction>
</comment>
<comment type="domain">
    <text>The EXKPK motif is conserved in inositol-pentakisphosphate 2-kinases of both family 1 and 2.</text>
</comment>
<comment type="similarity">
    <text evidence="2">Belongs to the IPK1 type 2 family.</text>
</comment>
<proteinExistence type="inferred from homology"/>
<keyword id="KW-0067">ATP-binding</keyword>
<keyword id="KW-0418">Kinase</keyword>
<keyword id="KW-0547">Nucleotide-binding</keyword>
<keyword id="KW-1185">Reference proteome</keyword>
<keyword id="KW-0808">Transferase</keyword>
<name>IPPK_CRYNJ</name>
<gene>
    <name type="primary">IPK1</name>
    <name type="ordered locus">CND04140</name>
</gene>
<organism>
    <name type="scientific">Cryptococcus neoformans var. neoformans serotype D (strain JEC21 / ATCC MYA-565)</name>
    <name type="common">Filobasidiella neoformans</name>
    <dbReference type="NCBI Taxonomy" id="214684"/>
    <lineage>
        <taxon>Eukaryota</taxon>
        <taxon>Fungi</taxon>
        <taxon>Dikarya</taxon>
        <taxon>Basidiomycota</taxon>
        <taxon>Agaricomycotina</taxon>
        <taxon>Tremellomycetes</taxon>
        <taxon>Tremellales</taxon>
        <taxon>Cryptococcaceae</taxon>
        <taxon>Cryptococcus</taxon>
        <taxon>Cryptococcus neoformans species complex</taxon>
    </lineage>
</organism>
<dbReference type="EC" id="2.7.1.158"/>
<dbReference type="EMBL" id="AE017344">
    <property type="protein sequence ID" value="AAW42830.1"/>
    <property type="molecule type" value="Genomic_DNA"/>
</dbReference>
<dbReference type="RefSeq" id="XP_570137.1">
    <property type="nucleotide sequence ID" value="XM_570137.1"/>
</dbReference>
<dbReference type="SMR" id="P0CO34"/>
<dbReference type="STRING" id="214684.P0CO34"/>
<dbReference type="PaxDb" id="214684-P0CO34"/>
<dbReference type="EnsemblFungi" id="AAW42830">
    <property type="protein sequence ID" value="AAW42830"/>
    <property type="gene ID" value="CND04140"/>
</dbReference>
<dbReference type="GeneID" id="3257216"/>
<dbReference type="KEGG" id="cne:CND04140"/>
<dbReference type="VEuPathDB" id="FungiDB:CND04140"/>
<dbReference type="eggNOG" id="KOG4749">
    <property type="taxonomic scope" value="Eukaryota"/>
</dbReference>
<dbReference type="HOGENOM" id="CLU_033188_1_0_1"/>
<dbReference type="InParanoid" id="P0CO34"/>
<dbReference type="OMA" id="WKYISEG"/>
<dbReference type="OrthoDB" id="272370at2759"/>
<dbReference type="Proteomes" id="UP000002149">
    <property type="component" value="Chromosome 4"/>
</dbReference>
<dbReference type="GO" id="GO:0005634">
    <property type="term" value="C:nucleus"/>
    <property type="evidence" value="ECO:0000318"/>
    <property type="project" value="GO_Central"/>
</dbReference>
<dbReference type="GO" id="GO:0005524">
    <property type="term" value="F:ATP binding"/>
    <property type="evidence" value="ECO:0007669"/>
    <property type="project" value="UniProtKB-KW"/>
</dbReference>
<dbReference type="GO" id="GO:0035299">
    <property type="term" value="F:inositol-1,3,4,5,6-pentakisphosphate 2-kinase activity"/>
    <property type="evidence" value="ECO:0000318"/>
    <property type="project" value="GO_Central"/>
</dbReference>
<dbReference type="GO" id="GO:0032958">
    <property type="term" value="P:inositol phosphate biosynthetic process"/>
    <property type="evidence" value="ECO:0000318"/>
    <property type="project" value="GO_Central"/>
</dbReference>
<dbReference type="Gene3D" id="3.30.200.110">
    <property type="entry name" value="Inositol-pentakisphosphate 2-kinase, N-lobe"/>
    <property type="match status" value="1"/>
</dbReference>
<dbReference type="InterPro" id="IPR009286">
    <property type="entry name" value="Ins_P5_2-kin"/>
</dbReference>
<dbReference type="InterPro" id="IPR043001">
    <property type="entry name" value="IP5_2-K_N_lobe"/>
</dbReference>
<dbReference type="PANTHER" id="PTHR14456">
    <property type="entry name" value="INOSITOL POLYPHOSPHATE KINASE 1"/>
    <property type="match status" value="1"/>
</dbReference>
<dbReference type="PANTHER" id="PTHR14456:SF2">
    <property type="entry name" value="INOSITOL-PENTAKISPHOSPHATE 2-KINASE"/>
    <property type="match status" value="1"/>
</dbReference>
<dbReference type="Pfam" id="PF06090">
    <property type="entry name" value="Ins_P5_2-kin"/>
    <property type="match status" value="1"/>
</dbReference>
<evidence type="ECO:0000250" key="1"/>
<evidence type="ECO:0000305" key="2"/>
<feature type="chain" id="PRO_0000110535" description="Inositol-pentakisphosphate 2-kinase">
    <location>
        <begin position="1"/>
        <end position="414"/>
    </location>
</feature>
<feature type="short sequence motif" description="EXKPK motif">
    <location>
        <begin position="150"/>
        <end position="154"/>
    </location>
</feature>
<protein>
    <recommendedName>
        <fullName>Inositol-pentakisphosphate 2-kinase</fullName>
        <ecNumber>2.7.1.158</ecNumber>
    </recommendedName>
    <alternativeName>
        <fullName>Inositol-1,3,4,5,6-pentakisphosphate 2-kinase</fullName>
    </alternativeName>
    <alternativeName>
        <fullName>Ins(1,3,4,5,6)P5 2-kinase</fullName>
        <shortName>InsP5 2-kinase</shortName>
    </alternativeName>
</protein>